<comment type="catalytic activity">
    <reaction evidence="3">
        <text>a carboxylic ester + H2O = an alcohol + a carboxylate + H(+)</text>
        <dbReference type="Rhea" id="RHEA:21164"/>
        <dbReference type="ChEBI" id="CHEBI:15377"/>
        <dbReference type="ChEBI" id="CHEBI:15378"/>
        <dbReference type="ChEBI" id="CHEBI:29067"/>
        <dbReference type="ChEBI" id="CHEBI:30879"/>
        <dbReference type="ChEBI" id="CHEBI:33308"/>
        <dbReference type="EC" id="3.1.1.1"/>
    </reaction>
</comment>
<comment type="subcellular location">
    <subcellularLocation>
        <location>Cytoplasm</location>
    </subcellularLocation>
    <subcellularLocation>
        <location>Cell membrane</location>
        <topology>Lipid-anchor</topology>
        <orientation>Cytoplasmic side</orientation>
    </subcellularLocation>
</comment>
<comment type="similarity">
    <text evidence="4">Belongs to the type-B carboxylesterase/lipase family.</text>
</comment>
<proteinExistence type="inferred from homology"/>
<name>EST2_CAEEL</name>
<sequence length="554" mass="61825">MGGFLSHLTPEQNVEALKASCGPVRGNIYKHDDVIVDGYLGIPYAKPPVGELRFKKPVTVDVWTEIKDCYKYGPACVQTGGFEQIAGPRTPTPEEAGCLTLNVFTPRNASSEFKNGRPVMVYIHGGGYELCASSDFCAYSLSGTLPLKDVVVVSINYRLGVFGFLTTGDNVCPGNFGLWDQTLALKWVQKHISSFGGDPNCVTVFGQSAGGASTDLLSLSPHSRDLFQRFIPISGTAHCDFAIRASENQAKIFREFAEFHGFSGRDSSALFKWYQEQSPETLSNVKGYKKSISGFLTFIPNLDGDFFPKPLDELRKEAPKKQMMTGVTEYEGLMLASMNPAFSPADVGLTLMPQGIYGKDVVSNPDEIQKIFYEKYVEGVDKSDELAMRKKLCEALGDEFFNVGVIQAAKNAAKHGNEVYFYTFEYVNPDSFGMWDGMMPFKAAVHCTELRYLLGEGVYSKFEPTEEDRKVMETTTTLFSNFAKYGNPNGKGATAEIWEKYSLNRPERHYRISYPKCEMRDVYHEGRIQFLEKIDGDSDKYQELVYGKKKSAKI</sequence>
<protein>
    <recommendedName>
        <fullName evidence="4">Esterase cest-33</fullName>
        <ecNumber>3.1.1.1</ecNumber>
    </recommendedName>
    <alternativeName>
        <fullName evidence="5">Carboxyl esterase domain containing 33</fullName>
    </alternativeName>
</protein>
<gene>
    <name evidence="5" type="primary">cest-33</name>
    <name evidence="5" type="ORF">F13H6.3</name>
</gene>
<keyword id="KW-1003">Cell membrane</keyword>
<keyword id="KW-0963">Cytoplasm</keyword>
<keyword id="KW-1015">Disulfide bond</keyword>
<keyword id="KW-0378">Hydrolase</keyword>
<keyword id="KW-0449">Lipoprotein</keyword>
<keyword id="KW-0472">Membrane</keyword>
<keyword id="KW-0519">Myristate</keyword>
<keyword id="KW-1185">Reference proteome</keyword>
<keyword id="KW-0719">Serine esterase</keyword>
<accession>Q07085</accession>
<accession>O16351</accession>
<evidence type="ECO:0000250" key="1"/>
<evidence type="ECO:0000255" key="2"/>
<evidence type="ECO:0000255" key="3">
    <source>
        <dbReference type="PROSITE-ProRule" id="PRU10039"/>
    </source>
</evidence>
<evidence type="ECO:0000305" key="4"/>
<evidence type="ECO:0000312" key="5">
    <source>
        <dbReference type="WormBase" id="F13H6.3"/>
    </source>
</evidence>
<reference key="1">
    <citation type="journal article" date="1993" name="DNA Seq.">
        <title>cDNA sequence, gene structure, and cholinesterase-like domains of an esterase from Caenorhabditis elegans mapped to chromosome V.</title>
        <authorList>
            <person name="Fedon Y."/>
            <person name="Cousin X."/>
            <person name="Toutant J.-P."/>
            <person name="Thierry-Mieg D."/>
            <person name="Arpagaus M."/>
        </authorList>
    </citation>
    <scope>NUCLEOTIDE SEQUENCE [GENOMIC DNA]</scope>
</reference>
<reference key="2">
    <citation type="journal article" date="1998" name="Science">
        <title>Genome sequence of the nematode C. elegans: a platform for investigating biology.</title>
        <authorList>
            <consortium name="The C. elegans sequencing consortium"/>
        </authorList>
    </citation>
    <scope>NUCLEOTIDE SEQUENCE [LARGE SCALE GENOMIC DNA]</scope>
    <source>
        <strain>Bristol N2</strain>
    </source>
</reference>
<dbReference type="EC" id="3.1.1.1"/>
<dbReference type="EMBL" id="X66104">
    <property type="protein sequence ID" value="CAA46899.1"/>
    <property type="molecule type" value="Genomic_DNA"/>
</dbReference>
<dbReference type="EMBL" id="FO081144">
    <property type="protein sequence ID" value="CCD69466.1"/>
    <property type="molecule type" value="Genomic_DNA"/>
</dbReference>
<dbReference type="PIR" id="A56690">
    <property type="entry name" value="A56690"/>
</dbReference>
<dbReference type="PIR" id="T31783">
    <property type="entry name" value="T31783"/>
</dbReference>
<dbReference type="SMR" id="Q07085"/>
<dbReference type="BioGRID" id="44066">
    <property type="interactions" value="16"/>
</dbReference>
<dbReference type="DIP" id="DIP-25312N"/>
<dbReference type="FunCoup" id="Q07085">
    <property type="interactions" value="182"/>
</dbReference>
<dbReference type="IntAct" id="Q07085">
    <property type="interactions" value="2"/>
</dbReference>
<dbReference type="STRING" id="6239.F13H6.3.1"/>
<dbReference type="ESTHER" id="caeel-ester">
    <property type="family name" value="Carb_B_Nematoda"/>
</dbReference>
<dbReference type="MEROPS" id="S09.986"/>
<dbReference type="PaxDb" id="6239-F13H6.3"/>
<dbReference type="PeptideAtlas" id="Q07085"/>
<dbReference type="EnsemblMetazoa" id="F13H6.3.1">
    <property type="protein sequence ID" value="F13H6.3.1"/>
    <property type="gene ID" value="WBGene00017431"/>
</dbReference>
<dbReference type="KEGG" id="cel:CELE_F13H6.3"/>
<dbReference type="UCSC" id="F13H6.3">
    <property type="organism name" value="c. elegans"/>
</dbReference>
<dbReference type="AGR" id="WB:WBGene00017431"/>
<dbReference type="CTD" id="179020"/>
<dbReference type="WormBase" id="F13H6.3">
    <property type="protein sequence ID" value="CE09375"/>
    <property type="gene ID" value="WBGene00017431"/>
    <property type="gene designation" value="cest-33"/>
</dbReference>
<dbReference type="eggNOG" id="KOG1516">
    <property type="taxonomic scope" value="Eukaryota"/>
</dbReference>
<dbReference type="HOGENOM" id="CLU_006586_13_3_1"/>
<dbReference type="InParanoid" id="Q07085"/>
<dbReference type="OMA" id="SSDFCAY"/>
<dbReference type="OrthoDB" id="19653at2759"/>
<dbReference type="PhylomeDB" id="Q07085"/>
<dbReference type="PRO" id="PR:Q07085"/>
<dbReference type="Proteomes" id="UP000001940">
    <property type="component" value="Chromosome V"/>
</dbReference>
<dbReference type="Bgee" id="WBGene00017431">
    <property type="expression patterns" value="Expressed in larva and 4 other cell types or tissues"/>
</dbReference>
<dbReference type="GO" id="GO:0005737">
    <property type="term" value="C:cytoplasm"/>
    <property type="evidence" value="ECO:0007669"/>
    <property type="project" value="UniProtKB-SubCell"/>
</dbReference>
<dbReference type="GO" id="GO:0005886">
    <property type="term" value="C:plasma membrane"/>
    <property type="evidence" value="ECO:0007669"/>
    <property type="project" value="UniProtKB-SubCell"/>
</dbReference>
<dbReference type="GO" id="GO:0106435">
    <property type="term" value="F:carboxylesterase activity"/>
    <property type="evidence" value="ECO:0007669"/>
    <property type="project" value="UniProtKB-EC"/>
</dbReference>
<dbReference type="CDD" id="cd00312">
    <property type="entry name" value="Esterase_lipase"/>
    <property type="match status" value="1"/>
</dbReference>
<dbReference type="Gene3D" id="3.40.50.1820">
    <property type="entry name" value="alpha/beta hydrolase"/>
    <property type="match status" value="1"/>
</dbReference>
<dbReference type="InterPro" id="IPR029058">
    <property type="entry name" value="AB_hydrolase_fold"/>
</dbReference>
<dbReference type="InterPro" id="IPR002018">
    <property type="entry name" value="CarbesteraseB"/>
</dbReference>
<dbReference type="InterPro" id="IPR019826">
    <property type="entry name" value="Carboxylesterase_B_AS"/>
</dbReference>
<dbReference type="InterPro" id="IPR043187">
    <property type="entry name" value="CM06B1-like"/>
</dbReference>
<dbReference type="PANTHER" id="PTHR45029">
    <property type="entry name" value="CARBOXYLIC ESTER HYDROLASE-RELATED"/>
    <property type="match status" value="1"/>
</dbReference>
<dbReference type="PANTHER" id="PTHR45029:SF3">
    <property type="entry name" value="ESTERASE CM06B1"/>
    <property type="match status" value="1"/>
</dbReference>
<dbReference type="Pfam" id="PF00135">
    <property type="entry name" value="COesterase"/>
    <property type="match status" value="1"/>
</dbReference>
<dbReference type="SUPFAM" id="SSF53474">
    <property type="entry name" value="alpha/beta-Hydrolases"/>
    <property type="match status" value="1"/>
</dbReference>
<dbReference type="PROSITE" id="PS00122">
    <property type="entry name" value="CARBOXYLESTERASE_B_1"/>
    <property type="match status" value="1"/>
</dbReference>
<dbReference type="PROSITE" id="PS00941">
    <property type="entry name" value="CARBOXYLESTERASE_B_2"/>
    <property type="match status" value="1"/>
</dbReference>
<feature type="initiator methionine" description="Removed" evidence="2">
    <location>
        <position position="1"/>
    </location>
</feature>
<feature type="chain" id="PRO_0000070272" description="Esterase cest-33">
    <location>
        <begin position="2"/>
        <end position="554"/>
    </location>
</feature>
<feature type="active site" description="Acyl-ester intermediate" evidence="3">
    <location>
        <position position="208"/>
    </location>
</feature>
<feature type="active site" description="Charge relay system" evidence="1">
    <location>
        <position position="331"/>
    </location>
</feature>
<feature type="active site" description="Charge relay system" evidence="1">
    <location>
        <position position="446"/>
    </location>
</feature>
<feature type="lipid moiety-binding region" description="N-myristoyl glycine" evidence="2">
    <location>
        <position position="2"/>
    </location>
</feature>
<feature type="disulfide bond" evidence="1">
    <location>
        <begin position="76"/>
        <end position="98"/>
    </location>
</feature>
<feature type="sequence conflict" description="In Ref. 1; CAA46899." evidence="4" ref="1">
    <original>ELVYGKKKSAKI</original>
    <variation>NWSMERRSRQRFNFF</variation>
    <location>
        <begin position="543"/>
        <end position="554"/>
    </location>
</feature>
<organism>
    <name type="scientific">Caenorhabditis elegans</name>
    <dbReference type="NCBI Taxonomy" id="6239"/>
    <lineage>
        <taxon>Eukaryota</taxon>
        <taxon>Metazoa</taxon>
        <taxon>Ecdysozoa</taxon>
        <taxon>Nematoda</taxon>
        <taxon>Chromadorea</taxon>
        <taxon>Rhabditida</taxon>
        <taxon>Rhabditina</taxon>
        <taxon>Rhabditomorpha</taxon>
        <taxon>Rhabditoidea</taxon>
        <taxon>Rhabditidae</taxon>
        <taxon>Peloderinae</taxon>
        <taxon>Caenorhabditis</taxon>
    </lineage>
</organism>